<feature type="chain" id="PRO_1000059560" description="Chaperone protein DnaK">
    <location>
        <begin position="1"/>
        <end position="609"/>
    </location>
</feature>
<feature type="region of interest" description="Disordered" evidence="2">
    <location>
        <begin position="572"/>
        <end position="609"/>
    </location>
</feature>
<feature type="compositionally biased region" description="Low complexity" evidence="2">
    <location>
        <begin position="572"/>
        <end position="584"/>
    </location>
</feature>
<feature type="compositionally biased region" description="Acidic residues" evidence="2">
    <location>
        <begin position="593"/>
        <end position="609"/>
    </location>
</feature>
<feature type="modified residue" description="Phosphothreonine; by autocatalysis" evidence="1">
    <location>
        <position position="175"/>
    </location>
</feature>
<reference key="1">
    <citation type="journal article" date="2007" name="Genome Res.">
        <title>Genome characteristics of facultatively symbiotic Frankia sp. strains reflect host range and host plant biogeography.</title>
        <authorList>
            <person name="Normand P."/>
            <person name="Lapierre P."/>
            <person name="Tisa L.S."/>
            <person name="Gogarten J.P."/>
            <person name="Alloisio N."/>
            <person name="Bagnarol E."/>
            <person name="Bassi C.A."/>
            <person name="Berry A.M."/>
            <person name="Bickhart D.M."/>
            <person name="Choisne N."/>
            <person name="Couloux A."/>
            <person name="Cournoyer B."/>
            <person name="Cruveiller S."/>
            <person name="Daubin V."/>
            <person name="Demange N."/>
            <person name="Francino M.P."/>
            <person name="Goltsman E."/>
            <person name="Huang Y."/>
            <person name="Kopp O.R."/>
            <person name="Labarre L."/>
            <person name="Lapidus A."/>
            <person name="Lavire C."/>
            <person name="Marechal J."/>
            <person name="Martinez M."/>
            <person name="Mastronunzio J.E."/>
            <person name="Mullin B.C."/>
            <person name="Niemann J."/>
            <person name="Pujic P."/>
            <person name="Rawnsley T."/>
            <person name="Rouy Z."/>
            <person name="Schenowitz C."/>
            <person name="Sellstedt A."/>
            <person name="Tavares F."/>
            <person name="Tomkins J.P."/>
            <person name="Vallenet D."/>
            <person name="Valverde C."/>
            <person name="Wall L.G."/>
            <person name="Wang Y."/>
            <person name="Medigue C."/>
            <person name="Benson D.R."/>
        </authorList>
    </citation>
    <scope>NUCLEOTIDE SEQUENCE [LARGE SCALE GENOMIC DNA]</scope>
    <source>
        <strain>DSM 45986 / CECT 9034 / ACN14a</strain>
    </source>
</reference>
<sequence length="609" mass="65061">MARAVGIDLGTTNSVVSVLEGGEPTVIANAEGSRTTPSVVAFAKNGEVLVGEVAKRQAVTNVERTIRSVKRHMGTDWKMKVDAKDLTPQEISAFILQKLKRDAESYLGETVADAVITVPAYFDDAQRQATTEAGTIAGLNVLRIVNEPTAAALAYGLDKGEKEQTILVFDLGGGTFDVSLLEIGDGVVEVKSTSGDTHLGGDDWDQRITDHLIKTFNGQHGVDLGKDKMALQRLREAAEKAKIELSQSSQTSINLPYITASAEGPLHLDVSLTRAEFQRMTSDLIDRCKHPFQQAVKDAGIKVSDIDHVVLVGGSTRMPAVVDLVRDLTGGKEPNKGVNPDEVVAVGASLQAGVLKGEVKDVLLLDVTPLSLGIETKGGIMTKLIERNTTIPTKRSEIFTTAEDSQPSVQIQVFQGEREMAAYNKKLGMFELTGLPPAPRGLPQIEVTFDIDANGIVHVSAKDLGTGKEQSMTITGGSALPRDDIDRMVRDAEQYAEEDRNRREEAETRNKAETLVYSTERFLAENGEKIDAAVKSDVEEKLGTLRGAVAGTDTAAIREAADALAAASQAMGQAMYEQAAQDGAGAPGSGGPADDDVVDAEIVDEEDKK</sequence>
<comment type="function">
    <text evidence="1">Acts as a chaperone.</text>
</comment>
<comment type="induction">
    <text evidence="1">By stress conditions e.g. heat shock.</text>
</comment>
<comment type="similarity">
    <text evidence="1">Belongs to the heat shock protein 70 family.</text>
</comment>
<proteinExistence type="inferred from homology"/>
<protein>
    <recommendedName>
        <fullName evidence="1">Chaperone protein DnaK</fullName>
    </recommendedName>
    <alternativeName>
        <fullName evidence="1">HSP70</fullName>
    </alternativeName>
    <alternativeName>
        <fullName evidence="1">Heat shock 70 kDa protein</fullName>
    </alternativeName>
    <alternativeName>
        <fullName evidence="1">Heat shock protein 70</fullName>
    </alternativeName>
</protein>
<evidence type="ECO:0000255" key="1">
    <source>
        <dbReference type="HAMAP-Rule" id="MF_00332"/>
    </source>
</evidence>
<evidence type="ECO:0000256" key="2">
    <source>
        <dbReference type="SAM" id="MobiDB-lite"/>
    </source>
</evidence>
<organism>
    <name type="scientific">Frankia alni (strain DSM 45986 / CECT 9034 / ACN14a)</name>
    <dbReference type="NCBI Taxonomy" id="326424"/>
    <lineage>
        <taxon>Bacteria</taxon>
        <taxon>Bacillati</taxon>
        <taxon>Actinomycetota</taxon>
        <taxon>Actinomycetes</taxon>
        <taxon>Frankiales</taxon>
        <taxon>Frankiaceae</taxon>
        <taxon>Frankia</taxon>
    </lineage>
</organism>
<dbReference type="EMBL" id="CT573213">
    <property type="protein sequence ID" value="CAJ65262.1"/>
    <property type="molecule type" value="Genomic_DNA"/>
</dbReference>
<dbReference type="RefSeq" id="WP_011607676.1">
    <property type="nucleotide sequence ID" value="NC_008278.1"/>
</dbReference>
<dbReference type="SMR" id="Q0RBC4"/>
<dbReference type="STRING" id="326424.FRAAL6639"/>
<dbReference type="KEGG" id="fal:FRAAL6639"/>
<dbReference type="eggNOG" id="COG0443">
    <property type="taxonomic scope" value="Bacteria"/>
</dbReference>
<dbReference type="HOGENOM" id="CLU_005965_2_4_11"/>
<dbReference type="OrthoDB" id="9766019at2"/>
<dbReference type="Proteomes" id="UP000000657">
    <property type="component" value="Chromosome"/>
</dbReference>
<dbReference type="GO" id="GO:0005524">
    <property type="term" value="F:ATP binding"/>
    <property type="evidence" value="ECO:0007669"/>
    <property type="project" value="UniProtKB-UniRule"/>
</dbReference>
<dbReference type="GO" id="GO:0140662">
    <property type="term" value="F:ATP-dependent protein folding chaperone"/>
    <property type="evidence" value="ECO:0007669"/>
    <property type="project" value="InterPro"/>
</dbReference>
<dbReference type="GO" id="GO:0051082">
    <property type="term" value="F:unfolded protein binding"/>
    <property type="evidence" value="ECO:0007669"/>
    <property type="project" value="InterPro"/>
</dbReference>
<dbReference type="CDD" id="cd10234">
    <property type="entry name" value="ASKHA_NBD_HSP70_DnaK-like"/>
    <property type="match status" value="1"/>
</dbReference>
<dbReference type="FunFam" id="2.60.34.10:FF:000014">
    <property type="entry name" value="Chaperone protein DnaK HSP70"/>
    <property type="match status" value="1"/>
</dbReference>
<dbReference type="FunFam" id="1.20.1270.10:FF:000001">
    <property type="entry name" value="Molecular chaperone DnaK"/>
    <property type="match status" value="1"/>
</dbReference>
<dbReference type="FunFam" id="3.30.420.40:FF:000071">
    <property type="entry name" value="Molecular chaperone DnaK"/>
    <property type="match status" value="1"/>
</dbReference>
<dbReference type="FunFam" id="3.90.640.10:FF:000003">
    <property type="entry name" value="Molecular chaperone DnaK"/>
    <property type="match status" value="1"/>
</dbReference>
<dbReference type="Gene3D" id="1.20.1270.10">
    <property type="match status" value="1"/>
</dbReference>
<dbReference type="Gene3D" id="3.30.420.40">
    <property type="match status" value="2"/>
</dbReference>
<dbReference type="Gene3D" id="3.90.640.10">
    <property type="entry name" value="Actin, Chain A, domain 4"/>
    <property type="match status" value="1"/>
</dbReference>
<dbReference type="Gene3D" id="2.60.34.10">
    <property type="entry name" value="Substrate Binding Domain Of DNAk, Chain A, domain 1"/>
    <property type="match status" value="1"/>
</dbReference>
<dbReference type="HAMAP" id="MF_00332">
    <property type="entry name" value="DnaK"/>
    <property type="match status" value="1"/>
</dbReference>
<dbReference type="InterPro" id="IPR043129">
    <property type="entry name" value="ATPase_NBD"/>
</dbReference>
<dbReference type="InterPro" id="IPR012725">
    <property type="entry name" value="Chaperone_DnaK"/>
</dbReference>
<dbReference type="InterPro" id="IPR018181">
    <property type="entry name" value="Heat_shock_70_CS"/>
</dbReference>
<dbReference type="InterPro" id="IPR029048">
    <property type="entry name" value="HSP70_C_sf"/>
</dbReference>
<dbReference type="InterPro" id="IPR029047">
    <property type="entry name" value="HSP70_peptide-bd_sf"/>
</dbReference>
<dbReference type="InterPro" id="IPR013126">
    <property type="entry name" value="Hsp_70_fam"/>
</dbReference>
<dbReference type="NCBIfam" id="NF001413">
    <property type="entry name" value="PRK00290.1"/>
    <property type="match status" value="1"/>
</dbReference>
<dbReference type="NCBIfam" id="TIGR02350">
    <property type="entry name" value="prok_dnaK"/>
    <property type="match status" value="1"/>
</dbReference>
<dbReference type="PANTHER" id="PTHR19375">
    <property type="entry name" value="HEAT SHOCK PROTEIN 70KDA"/>
    <property type="match status" value="1"/>
</dbReference>
<dbReference type="Pfam" id="PF00012">
    <property type="entry name" value="HSP70"/>
    <property type="match status" value="1"/>
</dbReference>
<dbReference type="PRINTS" id="PR00301">
    <property type="entry name" value="HEATSHOCK70"/>
</dbReference>
<dbReference type="SUPFAM" id="SSF53067">
    <property type="entry name" value="Actin-like ATPase domain"/>
    <property type="match status" value="2"/>
</dbReference>
<dbReference type="SUPFAM" id="SSF100934">
    <property type="entry name" value="Heat shock protein 70kD (HSP70), C-terminal subdomain"/>
    <property type="match status" value="1"/>
</dbReference>
<dbReference type="SUPFAM" id="SSF100920">
    <property type="entry name" value="Heat shock protein 70kD (HSP70), peptide-binding domain"/>
    <property type="match status" value="1"/>
</dbReference>
<dbReference type="PROSITE" id="PS00297">
    <property type="entry name" value="HSP70_1"/>
    <property type="match status" value="1"/>
</dbReference>
<dbReference type="PROSITE" id="PS00329">
    <property type="entry name" value="HSP70_2"/>
    <property type="match status" value="1"/>
</dbReference>
<dbReference type="PROSITE" id="PS01036">
    <property type="entry name" value="HSP70_3"/>
    <property type="match status" value="1"/>
</dbReference>
<accession>Q0RBC4</accession>
<name>DNAK_FRAAA</name>
<gene>
    <name evidence="1" type="primary">dnaK</name>
    <name type="ordered locus">FRAAL6639</name>
</gene>
<keyword id="KW-0067">ATP-binding</keyword>
<keyword id="KW-0143">Chaperone</keyword>
<keyword id="KW-0547">Nucleotide-binding</keyword>
<keyword id="KW-0597">Phosphoprotein</keyword>
<keyword id="KW-1185">Reference proteome</keyword>
<keyword id="KW-0346">Stress response</keyword>